<reference key="1">
    <citation type="submission" date="2004-11" db="EMBL/GenBank/DDBJ databases">
        <authorList>
            <consortium name="The German cDNA consortium"/>
        </authorList>
    </citation>
    <scope>NUCLEOTIDE SEQUENCE [LARGE SCALE MRNA]</scope>
    <source>
        <tissue>Kidney</tissue>
    </source>
</reference>
<name>LAT4_PONAB</name>
<protein>
    <recommendedName>
        <fullName evidence="2">Large neutral amino acids transporter small subunit 4</fullName>
    </recommendedName>
    <alternativeName>
        <fullName>L-type amino acid transporter 4</fullName>
    </alternativeName>
    <alternativeName>
        <fullName>Solute carrier family 43 member 2</fullName>
    </alternativeName>
</protein>
<organism>
    <name type="scientific">Pongo abelii</name>
    <name type="common">Sumatran orangutan</name>
    <name type="synonym">Pongo pygmaeus abelii</name>
    <dbReference type="NCBI Taxonomy" id="9601"/>
    <lineage>
        <taxon>Eukaryota</taxon>
        <taxon>Metazoa</taxon>
        <taxon>Chordata</taxon>
        <taxon>Craniata</taxon>
        <taxon>Vertebrata</taxon>
        <taxon>Euteleostomi</taxon>
        <taxon>Mammalia</taxon>
        <taxon>Eutheria</taxon>
        <taxon>Euarchontoglires</taxon>
        <taxon>Primates</taxon>
        <taxon>Haplorrhini</taxon>
        <taxon>Catarrhini</taxon>
        <taxon>Hominidae</taxon>
        <taxon>Pongo</taxon>
    </lineage>
</organism>
<sequence length="569" mass="62763">MAPTLATAHRRRWWMACTAVLENLLFSAVLLGWGSLLIMLKSEGFYSYLCTEPENVTNGTVGSTAEPGHGEASWMNGWLSCQAQDEMLNLAFTVGSFLLSAITLPLGIVMDKYGPRKLRLLGSACFAVSCLLIAYGASKPNALSVLIFIALALNGFGGMCMTFTSLTLPNMFGDLRSTFIALMIGSYASSAVTFPGIKLIYDAGVSFIIILVVWAGCSGLVFLNCFFNWPLEPFPGPEDMDYSVKVKFSWLGFDHKITGKQFYKQVTTVGRRLSVGSSMRSAKEQVVLQEGHKLCLSTVDLEVKCQPDAAAAPSFMHSVFSPILLLSLITMCVTQLRLIFYMGAMNNILKFLVSGDQKTVGLYTSIFGVLQLLCLLTAPVIDYIMDWRLKECEDASEEPEEKDANQGEKKKKKRDRQIQKITNAMRAFAFTNLLLVGFGVTCLIPNLPLQILSFILHTIVRGFIHSAVGGLYAAVYPSTQFGSLTGLQSLISALFALLQQPLFLAMMGPLQGDPLWVNVGLLLLSLLGFCLPLYLICYRRQLERQLQQRQEDDKLFLKINGSSNQEAFV</sequence>
<dbReference type="EMBL" id="CR857303">
    <property type="protein sequence ID" value="CAH89599.1"/>
    <property type="molecule type" value="mRNA"/>
</dbReference>
<dbReference type="RefSeq" id="NP_001124710.1">
    <property type="nucleotide sequence ID" value="NM_001131238.1"/>
</dbReference>
<dbReference type="FunCoup" id="Q5RF58">
    <property type="interactions" value="256"/>
</dbReference>
<dbReference type="STRING" id="9601.ENSPPYP00000008759"/>
<dbReference type="GlyCosmos" id="Q5RF58">
    <property type="glycosylation" value="3 sites, No reported glycans"/>
</dbReference>
<dbReference type="GeneID" id="100171558"/>
<dbReference type="KEGG" id="pon:100171558"/>
<dbReference type="CTD" id="124935"/>
<dbReference type="eggNOG" id="ENOG502QTQJ">
    <property type="taxonomic scope" value="Eukaryota"/>
</dbReference>
<dbReference type="InParanoid" id="Q5RF58"/>
<dbReference type="OrthoDB" id="330047at2759"/>
<dbReference type="Proteomes" id="UP000001595">
    <property type="component" value="Unplaced"/>
</dbReference>
<dbReference type="GO" id="GO:0016323">
    <property type="term" value="C:basolateral plasma membrane"/>
    <property type="evidence" value="ECO:0000250"/>
    <property type="project" value="UniProtKB"/>
</dbReference>
<dbReference type="GO" id="GO:0015188">
    <property type="term" value="F:L-isoleucine transmembrane transporter activity"/>
    <property type="evidence" value="ECO:0000250"/>
    <property type="project" value="UniProtKB"/>
</dbReference>
<dbReference type="GO" id="GO:0015190">
    <property type="term" value="F:L-leucine transmembrane transporter activity"/>
    <property type="evidence" value="ECO:0000250"/>
    <property type="project" value="UniProtKB"/>
</dbReference>
<dbReference type="GO" id="GO:0015191">
    <property type="term" value="F:L-methionine transmembrane transporter activity"/>
    <property type="evidence" value="ECO:0000250"/>
    <property type="project" value="UniProtKB"/>
</dbReference>
<dbReference type="GO" id="GO:0015192">
    <property type="term" value="F:L-phenylalanine transmembrane transporter activity"/>
    <property type="evidence" value="ECO:0000250"/>
    <property type="project" value="UniProtKB"/>
</dbReference>
<dbReference type="GO" id="GO:0015818">
    <property type="term" value="P:isoleucine transport"/>
    <property type="evidence" value="ECO:0000250"/>
    <property type="project" value="UniProtKB"/>
</dbReference>
<dbReference type="GO" id="GO:0015820">
    <property type="term" value="P:L-leucine transport"/>
    <property type="evidence" value="ECO:0000250"/>
    <property type="project" value="UniProtKB"/>
</dbReference>
<dbReference type="GO" id="GO:0015821">
    <property type="term" value="P:methionine transport"/>
    <property type="evidence" value="ECO:0000250"/>
    <property type="project" value="UniProtKB"/>
</dbReference>
<dbReference type="GO" id="GO:0015823">
    <property type="term" value="P:phenylalanine transport"/>
    <property type="evidence" value="ECO:0000250"/>
    <property type="project" value="UniProtKB"/>
</dbReference>
<dbReference type="Gene3D" id="1.20.1250.20">
    <property type="entry name" value="MFS general substrate transporter like domains"/>
    <property type="match status" value="1"/>
</dbReference>
<dbReference type="InterPro" id="IPR011701">
    <property type="entry name" value="MFS"/>
</dbReference>
<dbReference type="InterPro" id="IPR036259">
    <property type="entry name" value="MFS_trans_sf"/>
</dbReference>
<dbReference type="PANTHER" id="PTHR20766:SF2">
    <property type="entry name" value="LARGE NEUTRAL AMINO ACIDS TRANSPORTER SMALL SUBUNIT 4"/>
    <property type="match status" value="1"/>
</dbReference>
<dbReference type="PANTHER" id="PTHR20766">
    <property type="entry name" value="LARGE NEUTRAL AMINO ACIDS TRANSPORTER SMALL SUBUNIT 4-LIKE ISOFORM X1"/>
    <property type="match status" value="1"/>
</dbReference>
<dbReference type="Pfam" id="PF07690">
    <property type="entry name" value="MFS_1"/>
    <property type="match status" value="1"/>
</dbReference>
<dbReference type="SUPFAM" id="SSF103473">
    <property type="entry name" value="MFS general substrate transporter"/>
    <property type="match status" value="1"/>
</dbReference>
<accession>Q5RF58</accession>
<gene>
    <name evidence="2" type="primary">SLC43A2</name>
    <name type="synonym">LAT4</name>
</gene>
<comment type="function">
    <text evidence="2">Uniporter that mediates the transport of the stereospecific L-phenylalanine, L-methionine and L-branched-chain amino acids, between the extracellular space and the cytoplasm and may control the transepithelial (re)absorption of neutral amino acid in kidney and small intestine. The transport activity is mediated through facilitated diffusion and is sodium ions-, chloride ions- and pH-independent.</text>
</comment>
<comment type="catalytic activity">
    <reaction evidence="2">
        <text>L-leucine(in) = L-leucine(out)</text>
        <dbReference type="Rhea" id="RHEA:73011"/>
        <dbReference type="ChEBI" id="CHEBI:57427"/>
    </reaction>
</comment>
<comment type="catalytic activity">
    <reaction evidence="2">
        <text>L-isoleucine(in) = L-isoleucine(out)</text>
        <dbReference type="Rhea" id="RHEA:70943"/>
        <dbReference type="ChEBI" id="CHEBI:58045"/>
    </reaction>
</comment>
<comment type="catalytic activity">
    <reaction evidence="2">
        <text>L-methionine(in) = L-methionine(out)</text>
        <dbReference type="Rhea" id="RHEA:70939"/>
        <dbReference type="ChEBI" id="CHEBI:57844"/>
    </reaction>
</comment>
<comment type="catalytic activity">
    <reaction evidence="2">
        <text>L-phenylalanine(in) = L-phenylalanine(out)</text>
        <dbReference type="Rhea" id="RHEA:27950"/>
        <dbReference type="ChEBI" id="CHEBI:58095"/>
    </reaction>
</comment>
<comment type="activity regulation">
    <text evidence="2">Affinity and transport activity are regulated by a phosphorylation switch state at Ser-274 and Ser-297; increasing of affinity and amino acid transport activity via dephosphorylation at Ser-274 and phosphorylation at Ser-297.</text>
</comment>
<comment type="subcellular location">
    <subcellularLocation>
        <location evidence="1">Cell membrane</location>
        <topology evidence="3">Multi-pass membrane protein</topology>
    </subcellularLocation>
    <subcellularLocation>
        <location evidence="1">Basolateral cell membrane</location>
    </subcellularLocation>
    <text evidence="1">Located at the basolateral membrane in the small intestine enterocytes, kidney proximal tubule, thick ascending limb and, to a minor extent, of distal convoluted tubule epithelial cells.</text>
</comment>
<comment type="PTM">
    <text evidence="2">Glycosylated.</text>
</comment>
<comment type="PTM">
    <text evidence="1">Dephosphorylation at Ser-274 and phosphorylation at Ser-297 increase affinity and amino acid transport activity. Phosphorylation-dephosphorylation cycle is regulated by food-entrained diurnal rhythm and dietary proteins.</text>
</comment>
<comment type="similarity">
    <text evidence="5">Belongs to the SLC43A transporter (TC 2.A.1.44) family.</text>
</comment>
<feature type="chain" id="PRO_0000307274" description="Large neutral amino acids transporter small subunit 4">
    <location>
        <begin position="1"/>
        <end position="569"/>
    </location>
</feature>
<feature type="transmembrane region" description="Helical" evidence="3">
    <location>
        <begin position="20"/>
        <end position="40"/>
    </location>
</feature>
<feature type="transmembrane region" description="Helical" evidence="3">
    <location>
        <begin position="90"/>
        <end position="110"/>
    </location>
</feature>
<feature type="transmembrane region" description="Helical" evidence="3">
    <location>
        <begin position="120"/>
        <end position="140"/>
    </location>
</feature>
<feature type="transmembrane region" description="Helical" evidence="3">
    <location>
        <begin position="143"/>
        <end position="163"/>
    </location>
</feature>
<feature type="transmembrane region" description="Helical" evidence="3">
    <location>
        <begin position="177"/>
        <end position="197"/>
    </location>
</feature>
<feature type="transmembrane region" description="Helical" evidence="3">
    <location>
        <begin position="203"/>
        <end position="223"/>
    </location>
</feature>
<feature type="transmembrane region" description="Helical" evidence="3">
    <location>
        <begin position="309"/>
        <end position="329"/>
    </location>
</feature>
<feature type="transmembrane region" description="Helical" evidence="3">
    <location>
        <begin position="361"/>
        <end position="381"/>
    </location>
</feature>
<feature type="transmembrane region" description="Helical" evidence="3">
    <location>
        <begin position="435"/>
        <end position="455"/>
    </location>
</feature>
<feature type="transmembrane region" description="Helical" evidence="3">
    <location>
        <begin position="462"/>
        <end position="482"/>
    </location>
</feature>
<feature type="transmembrane region" description="Helical" evidence="3">
    <location>
        <begin position="490"/>
        <end position="510"/>
    </location>
</feature>
<feature type="transmembrane region" description="Helical" evidence="3">
    <location>
        <begin position="516"/>
        <end position="536"/>
    </location>
</feature>
<feature type="region of interest" description="Disordered" evidence="4">
    <location>
        <begin position="395"/>
        <end position="416"/>
    </location>
</feature>
<feature type="modified residue" description="Phosphoserine" evidence="2">
    <location>
        <position position="274"/>
    </location>
</feature>
<feature type="modified residue" description="Phosphoserine" evidence="2">
    <location>
        <position position="278"/>
    </location>
</feature>
<feature type="modified residue" description="Phosphoserine" evidence="2">
    <location>
        <position position="297"/>
    </location>
</feature>
<feature type="glycosylation site" description="N-linked (GlcNAc...) asparagine" evidence="3">
    <location>
        <position position="55"/>
    </location>
</feature>
<feature type="glycosylation site" description="N-linked (GlcNAc...) asparagine" evidence="3">
    <location>
        <position position="58"/>
    </location>
</feature>
<feature type="glycosylation site" description="N-linked (GlcNAc...) asparagine" evidence="3">
    <location>
        <position position="560"/>
    </location>
</feature>
<proteinExistence type="evidence at transcript level"/>
<evidence type="ECO:0000250" key="1">
    <source>
        <dbReference type="UniProtKB" id="Q8CGA3"/>
    </source>
</evidence>
<evidence type="ECO:0000250" key="2">
    <source>
        <dbReference type="UniProtKB" id="Q8N370"/>
    </source>
</evidence>
<evidence type="ECO:0000255" key="3"/>
<evidence type="ECO:0000256" key="4">
    <source>
        <dbReference type="SAM" id="MobiDB-lite"/>
    </source>
</evidence>
<evidence type="ECO:0000305" key="5"/>
<keyword id="KW-0029">Amino-acid transport</keyword>
<keyword id="KW-1003">Cell membrane</keyword>
<keyword id="KW-0325">Glycoprotein</keyword>
<keyword id="KW-0472">Membrane</keyword>
<keyword id="KW-0597">Phosphoprotein</keyword>
<keyword id="KW-1185">Reference proteome</keyword>
<keyword id="KW-0812">Transmembrane</keyword>
<keyword id="KW-1133">Transmembrane helix</keyword>
<keyword id="KW-0813">Transport</keyword>